<name>YCAD_ECO7I</name>
<organism>
    <name type="scientific">Escherichia coli O7:K1 (strain IAI39 / ExPEC)</name>
    <dbReference type="NCBI Taxonomy" id="585057"/>
    <lineage>
        <taxon>Bacteria</taxon>
        <taxon>Pseudomonadati</taxon>
        <taxon>Pseudomonadota</taxon>
        <taxon>Gammaproteobacteria</taxon>
        <taxon>Enterobacterales</taxon>
        <taxon>Enterobacteriaceae</taxon>
        <taxon>Escherichia</taxon>
    </lineage>
</organism>
<feature type="chain" id="PRO_1000137485" description="Uncharacterized MFS-type transporter YcaD">
    <location>
        <begin position="1"/>
        <end position="382"/>
    </location>
</feature>
<feature type="transmembrane region" description="Helical" evidence="1">
    <location>
        <begin position="14"/>
        <end position="34"/>
    </location>
</feature>
<feature type="transmembrane region" description="Helical" evidence="1">
    <location>
        <begin position="45"/>
        <end position="65"/>
    </location>
</feature>
<feature type="transmembrane region" description="Helical" evidence="1">
    <location>
        <begin position="79"/>
        <end position="99"/>
    </location>
</feature>
<feature type="transmembrane region" description="Helical" evidence="1">
    <location>
        <begin position="102"/>
        <end position="122"/>
    </location>
</feature>
<feature type="transmembrane region" description="Helical" evidence="1">
    <location>
        <begin position="131"/>
        <end position="151"/>
    </location>
</feature>
<feature type="transmembrane region" description="Helical" evidence="1">
    <location>
        <begin position="157"/>
        <end position="177"/>
    </location>
</feature>
<feature type="transmembrane region" description="Helical" evidence="1">
    <location>
        <begin position="204"/>
        <end position="224"/>
    </location>
</feature>
<feature type="transmembrane region" description="Helical" evidence="1">
    <location>
        <begin position="235"/>
        <end position="255"/>
    </location>
</feature>
<feature type="transmembrane region" description="Helical" evidence="1">
    <location>
        <begin position="270"/>
        <end position="290"/>
    </location>
</feature>
<feature type="transmembrane region" description="Helical" evidence="1">
    <location>
        <begin position="291"/>
        <end position="311"/>
    </location>
</feature>
<feature type="transmembrane region" description="Helical" evidence="1">
    <location>
        <begin position="325"/>
        <end position="345"/>
    </location>
</feature>
<feature type="transmembrane region" description="Helical" evidence="1">
    <location>
        <begin position="348"/>
        <end position="368"/>
    </location>
</feature>
<evidence type="ECO:0000255" key="1">
    <source>
        <dbReference type="HAMAP-Rule" id="MF_01149"/>
    </source>
</evidence>
<sequence length="382" mass="41444">MSTYTRPVMLLLSGLLLLTLAIAVLNTLVPLWLAQEHMSTWQVGVVSSSYFTGNLVGTLLTGYVIKRIGFNRSYYLASFIFAAGCAGLGLMIGFWSWLAWRFVAGVGCAMIWVVVESALMCSGTSRNRGRLLAAYMMVYYVGTFLGQLLVSKVSTELMSVLPWVTGLTLAGILPLLFTRVLNQQAENHDATSITSMLKLRQARLGVNGCIISGIVLGSLYGLMPLYLNHKGVSNASIGFWMAVLVSAGILGQWPIGRLADKFGRLLVLRVQVFVVILGSIAMLSQAAMAPALFILGAAGFTLYPVAMAWACEKVEHHQLVAMNQALLLSYTVGSLLGPSFTAMLMQNFSDNLLFIMIASVSFIYLLMLLRNAGHTPKPVAHV</sequence>
<comment type="subcellular location">
    <subcellularLocation>
        <location evidence="1">Cell inner membrane</location>
        <topology evidence="1">Multi-pass membrane protein</topology>
    </subcellularLocation>
</comment>
<comment type="similarity">
    <text evidence="1">Belongs to the major facilitator superfamily. YcaD (TC 2.A.1.26) family.</text>
</comment>
<keyword id="KW-0997">Cell inner membrane</keyword>
<keyword id="KW-1003">Cell membrane</keyword>
<keyword id="KW-0472">Membrane</keyword>
<keyword id="KW-0812">Transmembrane</keyword>
<keyword id="KW-1133">Transmembrane helix</keyword>
<keyword id="KW-0813">Transport</keyword>
<dbReference type="EMBL" id="CU928164">
    <property type="protein sequence ID" value="CAR18377.1"/>
    <property type="molecule type" value="Genomic_DNA"/>
</dbReference>
<dbReference type="RefSeq" id="WP_000109288.1">
    <property type="nucleotide sequence ID" value="NC_011750.1"/>
</dbReference>
<dbReference type="RefSeq" id="YP_002408213.1">
    <property type="nucleotide sequence ID" value="NC_011750.1"/>
</dbReference>
<dbReference type="SMR" id="B7NM77"/>
<dbReference type="STRING" id="585057.ECIAI39_2250"/>
<dbReference type="KEGG" id="ect:ECIAI39_2250"/>
<dbReference type="PATRIC" id="fig|585057.6.peg.2343"/>
<dbReference type="HOGENOM" id="CLU_035018_1_2_6"/>
<dbReference type="Proteomes" id="UP000000749">
    <property type="component" value="Chromosome"/>
</dbReference>
<dbReference type="GO" id="GO:0005886">
    <property type="term" value="C:plasma membrane"/>
    <property type="evidence" value="ECO:0007669"/>
    <property type="project" value="UniProtKB-SubCell"/>
</dbReference>
<dbReference type="GO" id="GO:0022857">
    <property type="term" value="F:transmembrane transporter activity"/>
    <property type="evidence" value="ECO:0007669"/>
    <property type="project" value="UniProtKB-UniRule"/>
</dbReference>
<dbReference type="CDD" id="cd17477">
    <property type="entry name" value="MFS_YcaD_like"/>
    <property type="match status" value="1"/>
</dbReference>
<dbReference type="FunFam" id="1.20.1250.20:FF:000041">
    <property type="entry name" value="Uncharacterized MFS-type transporter YcaD"/>
    <property type="match status" value="1"/>
</dbReference>
<dbReference type="FunFam" id="1.20.1250.20:FF:000066">
    <property type="entry name" value="Uncharacterized MFS-type transporter YcaD"/>
    <property type="match status" value="1"/>
</dbReference>
<dbReference type="Gene3D" id="1.20.1250.20">
    <property type="entry name" value="MFS general substrate transporter like domains"/>
    <property type="match status" value="2"/>
</dbReference>
<dbReference type="HAMAP" id="MF_01149">
    <property type="entry name" value="MFS_YcaD"/>
    <property type="match status" value="1"/>
</dbReference>
<dbReference type="InterPro" id="IPR011701">
    <property type="entry name" value="MFS"/>
</dbReference>
<dbReference type="InterPro" id="IPR020846">
    <property type="entry name" value="MFS_dom"/>
</dbReference>
<dbReference type="InterPro" id="IPR036259">
    <property type="entry name" value="MFS_trans_sf"/>
</dbReference>
<dbReference type="InterPro" id="IPR023745">
    <property type="entry name" value="MFS_YcaD"/>
</dbReference>
<dbReference type="InterPro" id="IPR047200">
    <property type="entry name" value="MFS_YcaD-like"/>
</dbReference>
<dbReference type="NCBIfam" id="NF002962">
    <property type="entry name" value="PRK03633.1"/>
    <property type="match status" value="1"/>
</dbReference>
<dbReference type="PANTHER" id="PTHR23521">
    <property type="entry name" value="TRANSPORTER MFS SUPERFAMILY"/>
    <property type="match status" value="1"/>
</dbReference>
<dbReference type="PANTHER" id="PTHR23521:SF2">
    <property type="entry name" value="TRANSPORTER MFS SUPERFAMILY"/>
    <property type="match status" value="1"/>
</dbReference>
<dbReference type="Pfam" id="PF07690">
    <property type="entry name" value="MFS_1"/>
    <property type="match status" value="1"/>
</dbReference>
<dbReference type="SUPFAM" id="SSF103473">
    <property type="entry name" value="MFS general substrate transporter"/>
    <property type="match status" value="1"/>
</dbReference>
<dbReference type="PROSITE" id="PS50850">
    <property type="entry name" value="MFS"/>
    <property type="match status" value="1"/>
</dbReference>
<reference key="1">
    <citation type="journal article" date="2009" name="PLoS Genet.">
        <title>Organised genome dynamics in the Escherichia coli species results in highly diverse adaptive paths.</title>
        <authorList>
            <person name="Touchon M."/>
            <person name="Hoede C."/>
            <person name="Tenaillon O."/>
            <person name="Barbe V."/>
            <person name="Baeriswyl S."/>
            <person name="Bidet P."/>
            <person name="Bingen E."/>
            <person name="Bonacorsi S."/>
            <person name="Bouchier C."/>
            <person name="Bouvet O."/>
            <person name="Calteau A."/>
            <person name="Chiapello H."/>
            <person name="Clermont O."/>
            <person name="Cruveiller S."/>
            <person name="Danchin A."/>
            <person name="Diard M."/>
            <person name="Dossat C."/>
            <person name="Karoui M.E."/>
            <person name="Frapy E."/>
            <person name="Garry L."/>
            <person name="Ghigo J.M."/>
            <person name="Gilles A.M."/>
            <person name="Johnson J."/>
            <person name="Le Bouguenec C."/>
            <person name="Lescat M."/>
            <person name="Mangenot S."/>
            <person name="Martinez-Jehanne V."/>
            <person name="Matic I."/>
            <person name="Nassif X."/>
            <person name="Oztas S."/>
            <person name="Petit M.A."/>
            <person name="Pichon C."/>
            <person name="Rouy Z."/>
            <person name="Ruf C.S."/>
            <person name="Schneider D."/>
            <person name="Tourret J."/>
            <person name="Vacherie B."/>
            <person name="Vallenet D."/>
            <person name="Medigue C."/>
            <person name="Rocha E.P.C."/>
            <person name="Denamur E."/>
        </authorList>
    </citation>
    <scope>NUCLEOTIDE SEQUENCE [LARGE SCALE GENOMIC DNA]</scope>
    <source>
        <strain>IAI39 / ExPEC</strain>
    </source>
</reference>
<accession>B7NM77</accession>
<protein>
    <recommendedName>
        <fullName evidence="1">Uncharacterized MFS-type transporter YcaD</fullName>
    </recommendedName>
</protein>
<proteinExistence type="inferred from homology"/>
<gene>
    <name evidence="1" type="primary">ycaD</name>
    <name type="ordered locus">ECIAI39_2250</name>
</gene>